<feature type="chain" id="PRO_0000165843" description="Peptidase B">
    <location>
        <begin position="1"/>
        <end position="427"/>
    </location>
</feature>
<feature type="active site" evidence="1">
    <location>
        <position position="207"/>
    </location>
</feature>
<feature type="active site" evidence="1">
    <location>
        <position position="281"/>
    </location>
</feature>
<feature type="binding site" evidence="1">
    <location>
        <position position="195"/>
    </location>
    <ligand>
        <name>Mn(2+)</name>
        <dbReference type="ChEBI" id="CHEBI:29035"/>
        <label>2</label>
    </ligand>
</feature>
<feature type="binding site" evidence="1">
    <location>
        <position position="200"/>
    </location>
    <ligand>
        <name>Mn(2+)</name>
        <dbReference type="ChEBI" id="CHEBI:29035"/>
        <label>1</label>
    </ligand>
</feature>
<feature type="binding site" evidence="1">
    <location>
        <position position="200"/>
    </location>
    <ligand>
        <name>Mn(2+)</name>
        <dbReference type="ChEBI" id="CHEBI:29035"/>
        <label>2</label>
    </ligand>
</feature>
<feature type="binding site" evidence="1">
    <location>
        <position position="218"/>
    </location>
    <ligand>
        <name>Mn(2+)</name>
        <dbReference type="ChEBI" id="CHEBI:29035"/>
        <label>2</label>
    </ligand>
</feature>
<feature type="binding site" evidence="1">
    <location>
        <position position="277"/>
    </location>
    <ligand>
        <name>Mn(2+)</name>
        <dbReference type="ChEBI" id="CHEBI:29035"/>
        <label>1</label>
    </ligand>
</feature>
<feature type="binding site" evidence="1">
    <location>
        <position position="279"/>
    </location>
    <ligand>
        <name>Mn(2+)</name>
        <dbReference type="ChEBI" id="CHEBI:29035"/>
        <label>1</label>
    </ligand>
</feature>
<feature type="binding site" evidence="1">
    <location>
        <position position="279"/>
    </location>
    <ligand>
        <name>Mn(2+)</name>
        <dbReference type="ChEBI" id="CHEBI:29035"/>
        <label>2</label>
    </ligand>
</feature>
<protein>
    <recommendedName>
        <fullName evidence="1">Peptidase B</fullName>
        <ecNumber evidence="1">3.4.11.23</ecNumber>
    </recommendedName>
    <alternativeName>
        <fullName evidence="1">Aminopeptidase B</fullName>
    </alternativeName>
</protein>
<keyword id="KW-0031">Aminopeptidase</keyword>
<keyword id="KW-0963">Cytoplasm</keyword>
<keyword id="KW-0378">Hydrolase</keyword>
<keyword id="KW-0464">Manganese</keyword>
<keyword id="KW-0479">Metal-binding</keyword>
<keyword id="KW-0645">Protease</keyword>
<organism>
    <name type="scientific">Shigella boydii serotype 4 (strain Sb227)</name>
    <dbReference type="NCBI Taxonomy" id="300268"/>
    <lineage>
        <taxon>Bacteria</taxon>
        <taxon>Pseudomonadati</taxon>
        <taxon>Pseudomonadota</taxon>
        <taxon>Gammaproteobacteria</taxon>
        <taxon>Enterobacterales</taxon>
        <taxon>Enterobacteriaceae</taxon>
        <taxon>Shigella</taxon>
    </lineage>
</organism>
<comment type="function">
    <text evidence="1">Probably plays an important role in intracellular peptide degradation.</text>
</comment>
<comment type="catalytic activity">
    <reaction evidence="1">
        <text>Release of an N-terminal amino acid, Xaa, from a peptide or arylamide. Xaa is preferably Glu or Asp but may be other amino acids, including Leu, Met, His, Cys and Gln.</text>
        <dbReference type="EC" id="3.4.11.23"/>
    </reaction>
</comment>
<comment type="cofactor">
    <cofactor evidence="1">
        <name>Mn(2+)</name>
        <dbReference type="ChEBI" id="CHEBI:29035"/>
    </cofactor>
    <text evidence="1">Binds 2 manganese ions per subunit.</text>
</comment>
<comment type="subunit">
    <text evidence="1">Homohexamer.</text>
</comment>
<comment type="subcellular location">
    <subcellularLocation>
        <location evidence="1">Cytoplasm</location>
    </subcellularLocation>
</comment>
<comment type="similarity">
    <text evidence="1">Belongs to the peptidase M17 family.</text>
</comment>
<comment type="sequence caution" evidence="2">
    <conflict type="erroneous initiation">
        <sequence resource="EMBL-CDS" id="ABB67091"/>
    </conflict>
</comment>
<sequence>MTEAMKITLSTQPADARWGEKATYSINNDGITLHLNGADDLGLIQRAARKIDGLGIKHVQLSGEGWDADRCWAFWQGYKAPKGTRKVEWPDLDDAQRQELDNRLMIIDWVRDTINAPAEELGPSQLAQRAVDLISNVAGDRVTYRITKGEDLREQGYMGLHTVGRASERSPVLLALDYNPTGDKEAPVYACLVGKGITFDSGGYSIKQTAFMDSMKSDMGGAATVTGALAFAITRGLNKRVKLFLCCADNLISGNAFKLGDIITYRNGKKVEVMNTDAEGRLVLADGLIDASAQKPEMIIDAATLTGAAKTALGNDYHALFSFDDALAGRLLASASQENEPFWRLPLAEFHRSQLPSNFAELNNTGSAAYPAGASTAAGFLSHFVENYQQGWLHIDCSATYRKAPVEQWSAGATGLGVRTIANLLTA</sequence>
<accession>Q31XW7</accession>
<gene>
    <name evidence="1" type="primary">pepB</name>
    <name type="ordered locus">SBO_2547</name>
</gene>
<reference key="1">
    <citation type="journal article" date="2005" name="Nucleic Acids Res.">
        <title>Genome dynamics and diversity of Shigella species, the etiologic agents of bacillary dysentery.</title>
        <authorList>
            <person name="Yang F."/>
            <person name="Yang J."/>
            <person name="Zhang X."/>
            <person name="Chen L."/>
            <person name="Jiang Y."/>
            <person name="Yan Y."/>
            <person name="Tang X."/>
            <person name="Wang J."/>
            <person name="Xiong Z."/>
            <person name="Dong J."/>
            <person name="Xue Y."/>
            <person name="Zhu Y."/>
            <person name="Xu X."/>
            <person name="Sun L."/>
            <person name="Chen S."/>
            <person name="Nie H."/>
            <person name="Peng J."/>
            <person name="Xu J."/>
            <person name="Wang Y."/>
            <person name="Yuan Z."/>
            <person name="Wen Y."/>
            <person name="Yao Z."/>
            <person name="Shen Y."/>
            <person name="Qiang B."/>
            <person name="Hou Y."/>
            <person name="Yu J."/>
            <person name="Jin Q."/>
        </authorList>
    </citation>
    <scope>NUCLEOTIDE SEQUENCE [LARGE SCALE GENOMIC DNA]</scope>
    <source>
        <strain>Sb227</strain>
    </source>
</reference>
<evidence type="ECO:0000255" key="1">
    <source>
        <dbReference type="HAMAP-Rule" id="MF_00504"/>
    </source>
</evidence>
<evidence type="ECO:0000305" key="2"/>
<proteinExistence type="inferred from homology"/>
<dbReference type="EC" id="3.4.11.23" evidence="1"/>
<dbReference type="EMBL" id="CP000036">
    <property type="protein sequence ID" value="ABB67091.1"/>
    <property type="status" value="ALT_INIT"/>
    <property type="molecule type" value="Genomic_DNA"/>
</dbReference>
<dbReference type="RefSeq" id="WP_000133575.1">
    <property type="nucleotide sequence ID" value="NC_007613.1"/>
</dbReference>
<dbReference type="SMR" id="Q31XW7"/>
<dbReference type="MEROPS" id="M17.004"/>
<dbReference type="KEGG" id="sbo:SBO_2547"/>
<dbReference type="HOGENOM" id="CLU_013734_7_1_6"/>
<dbReference type="Proteomes" id="UP000007067">
    <property type="component" value="Chromosome"/>
</dbReference>
<dbReference type="GO" id="GO:0005737">
    <property type="term" value="C:cytoplasm"/>
    <property type="evidence" value="ECO:0007669"/>
    <property type="project" value="UniProtKB-SubCell"/>
</dbReference>
<dbReference type="GO" id="GO:0030145">
    <property type="term" value="F:manganese ion binding"/>
    <property type="evidence" value="ECO:0007669"/>
    <property type="project" value="UniProtKB-UniRule"/>
</dbReference>
<dbReference type="GO" id="GO:0070006">
    <property type="term" value="F:metalloaminopeptidase activity"/>
    <property type="evidence" value="ECO:0007669"/>
    <property type="project" value="InterPro"/>
</dbReference>
<dbReference type="GO" id="GO:0006508">
    <property type="term" value="P:proteolysis"/>
    <property type="evidence" value="ECO:0007669"/>
    <property type="project" value="UniProtKB-UniRule"/>
</dbReference>
<dbReference type="CDD" id="cd00433">
    <property type="entry name" value="Peptidase_M17"/>
    <property type="match status" value="1"/>
</dbReference>
<dbReference type="FunFam" id="3.40.630.10:FF:000037">
    <property type="entry name" value="Peptidase B"/>
    <property type="match status" value="1"/>
</dbReference>
<dbReference type="Gene3D" id="3.40.630.10">
    <property type="entry name" value="Zn peptidases"/>
    <property type="match status" value="1"/>
</dbReference>
<dbReference type="HAMAP" id="MF_00504">
    <property type="entry name" value="Aminopeptidase_M17"/>
    <property type="match status" value="1"/>
</dbReference>
<dbReference type="InterPro" id="IPR011356">
    <property type="entry name" value="Leucine_aapep/pepB"/>
</dbReference>
<dbReference type="InterPro" id="IPR047620">
    <property type="entry name" value="M17_PepB-like_N"/>
</dbReference>
<dbReference type="InterPro" id="IPR008330">
    <property type="entry name" value="Pept_M17_PepB"/>
</dbReference>
<dbReference type="InterPro" id="IPR000819">
    <property type="entry name" value="Peptidase_M17_C"/>
</dbReference>
<dbReference type="NCBIfam" id="NF003450">
    <property type="entry name" value="PRK05015.1"/>
    <property type="match status" value="1"/>
</dbReference>
<dbReference type="PANTHER" id="PTHR11963">
    <property type="entry name" value="LEUCINE AMINOPEPTIDASE-RELATED"/>
    <property type="match status" value="1"/>
</dbReference>
<dbReference type="PANTHER" id="PTHR11963:SF20">
    <property type="entry name" value="PEPTIDASE B"/>
    <property type="match status" value="1"/>
</dbReference>
<dbReference type="Pfam" id="PF12404">
    <property type="entry name" value="DUF3663"/>
    <property type="match status" value="1"/>
</dbReference>
<dbReference type="Pfam" id="PF00883">
    <property type="entry name" value="Peptidase_M17"/>
    <property type="match status" value="1"/>
</dbReference>
<dbReference type="PIRSF" id="PIRSF036388">
    <property type="entry name" value="Ctsl_amnpptdse_B"/>
    <property type="match status" value="1"/>
</dbReference>
<dbReference type="PRINTS" id="PR00481">
    <property type="entry name" value="LAMNOPPTDASE"/>
</dbReference>
<dbReference type="SUPFAM" id="SSF53187">
    <property type="entry name" value="Zn-dependent exopeptidases"/>
    <property type="match status" value="1"/>
</dbReference>
<dbReference type="PROSITE" id="PS00631">
    <property type="entry name" value="CYTOSOL_AP"/>
    <property type="match status" value="1"/>
</dbReference>
<name>PEPB_SHIBS</name>